<accession>Q864L3</accession>
<dbReference type="EMBL" id="AY263393">
    <property type="protein sequence ID" value="AAP30026.2"/>
    <property type="molecule type" value="mRNA"/>
</dbReference>
<dbReference type="FunCoup" id="Q864L3">
    <property type="interactions" value="139"/>
</dbReference>
<dbReference type="STRING" id="9615.ENSCAFP00000042471"/>
<dbReference type="GlyCosmos" id="Q864L3">
    <property type="glycosylation" value="3 sites, No reported glycans"/>
</dbReference>
<dbReference type="PaxDb" id="9612-ENSCAFP00000042471"/>
<dbReference type="eggNOG" id="ENOG502R29H">
    <property type="taxonomic scope" value="Eukaryota"/>
</dbReference>
<dbReference type="InParanoid" id="Q864L3"/>
<dbReference type="OrthoDB" id="8750716at2759"/>
<dbReference type="Proteomes" id="UP000002254">
    <property type="component" value="Unplaced"/>
</dbReference>
<dbReference type="Proteomes" id="UP000694429">
    <property type="component" value="Unplaced"/>
</dbReference>
<dbReference type="Proteomes" id="UP000694542">
    <property type="component" value="Unplaced"/>
</dbReference>
<dbReference type="Proteomes" id="UP000805418">
    <property type="component" value="Unplaced"/>
</dbReference>
<dbReference type="GO" id="GO:0030424">
    <property type="term" value="C:axon"/>
    <property type="evidence" value="ECO:0007669"/>
    <property type="project" value="UniProtKB-SubCell"/>
</dbReference>
<dbReference type="GO" id="GO:0005886">
    <property type="term" value="C:plasma membrane"/>
    <property type="evidence" value="ECO:0000318"/>
    <property type="project" value="GO_Central"/>
</dbReference>
<dbReference type="GO" id="GO:0001518">
    <property type="term" value="C:voltage-gated sodium channel complex"/>
    <property type="evidence" value="ECO:0000250"/>
    <property type="project" value="UniProtKB"/>
</dbReference>
<dbReference type="GO" id="GO:0017080">
    <property type="term" value="F:sodium channel regulator activity"/>
    <property type="evidence" value="ECO:0000318"/>
    <property type="project" value="GO_Central"/>
</dbReference>
<dbReference type="GO" id="GO:0061337">
    <property type="term" value="P:cardiac conduction"/>
    <property type="evidence" value="ECO:0000318"/>
    <property type="project" value="GO_Central"/>
</dbReference>
<dbReference type="GO" id="GO:0086002">
    <property type="term" value="P:cardiac muscle cell action potential involved in contraction"/>
    <property type="evidence" value="ECO:0000318"/>
    <property type="project" value="GO_Central"/>
</dbReference>
<dbReference type="GO" id="GO:0086012">
    <property type="term" value="P:membrane depolarization during cardiac muscle cell action potential"/>
    <property type="evidence" value="ECO:0000318"/>
    <property type="project" value="GO_Central"/>
</dbReference>
<dbReference type="GO" id="GO:0006814">
    <property type="term" value="P:sodium ion transport"/>
    <property type="evidence" value="ECO:0007669"/>
    <property type="project" value="UniProtKB-KW"/>
</dbReference>
<dbReference type="CDD" id="cd05715">
    <property type="entry name" value="IgV_P0-like"/>
    <property type="match status" value="1"/>
</dbReference>
<dbReference type="FunFam" id="2.60.40.10:FF:001092">
    <property type="entry name" value="Sodium channel subunit beta-2"/>
    <property type="match status" value="1"/>
</dbReference>
<dbReference type="Gene3D" id="2.60.40.10">
    <property type="entry name" value="Immunoglobulins"/>
    <property type="match status" value="1"/>
</dbReference>
<dbReference type="InterPro" id="IPR007110">
    <property type="entry name" value="Ig-like_dom"/>
</dbReference>
<dbReference type="InterPro" id="IPR036179">
    <property type="entry name" value="Ig-like_dom_sf"/>
</dbReference>
<dbReference type="InterPro" id="IPR013783">
    <property type="entry name" value="Ig-like_fold"/>
</dbReference>
<dbReference type="InterPro" id="IPR003599">
    <property type="entry name" value="Ig_sub"/>
</dbReference>
<dbReference type="InterPro" id="IPR013106">
    <property type="entry name" value="Ig_V-set"/>
</dbReference>
<dbReference type="InterPro" id="IPR000920">
    <property type="entry name" value="Myelin_P0-rel"/>
</dbReference>
<dbReference type="PANTHER" id="PTHR13869">
    <property type="entry name" value="MYELIN P0 RELATED"/>
    <property type="match status" value="1"/>
</dbReference>
<dbReference type="PANTHER" id="PTHR13869:SF3">
    <property type="entry name" value="SODIUM CHANNEL SUBUNIT BETA-2"/>
    <property type="match status" value="1"/>
</dbReference>
<dbReference type="Pfam" id="PF07686">
    <property type="entry name" value="V-set"/>
    <property type="match status" value="1"/>
</dbReference>
<dbReference type="PRINTS" id="PR00213">
    <property type="entry name" value="MYELINP0"/>
</dbReference>
<dbReference type="SMART" id="SM00409">
    <property type="entry name" value="IG"/>
    <property type="match status" value="1"/>
</dbReference>
<dbReference type="SUPFAM" id="SSF48726">
    <property type="entry name" value="Immunoglobulin"/>
    <property type="match status" value="1"/>
</dbReference>
<dbReference type="PROSITE" id="PS50835">
    <property type="entry name" value="IG_LIKE"/>
    <property type="match status" value="1"/>
</dbReference>
<proteinExistence type="evidence at transcript level"/>
<protein>
    <recommendedName>
        <fullName evidence="1">Sodium channel regulatory subunit beta-2</fullName>
    </recommendedName>
</protein>
<name>SCN2B_CANLF</name>
<comment type="function">
    <text evidence="1">Regulatory subunit of multiple voltage-gated sodium (Nav) channels, that directly mediate the depolarization of excitable membranes. Navs, also called VGSCs (voltage-gated sodium channels) or VDSCs (voltage-dependent sodium channels), operate by switching between closed and open conformations depending on the voltage difference across the membrane. In the open conformation they allow Na(+) ions to selectively pass through the pore, along their electrochemical gradient. The influx of Na+ ions provokes membrane depolarization, initiating the propagation of electrical signals throughout cells and tissues. The accessory beta subunits participate in localization and functional modulation of the Nav channels. Modulates the activity of SCN1A/Nav1.1, SCN2A/Nav1.2, SCN2A/Nav1.3, SCN5A/Nav1.5, SCN8A/Nav1.6, SCN9A/Nav1.7 and SCN10A/Nav1.8.</text>
</comment>
<comment type="subunit">
    <text evidence="1 2">A voltage-gated sodium (Nav) channel consists of an ion-conducting pore-forming alpha subunit functional on its own that is regulated by one or more beta subunits. The beta subunit SCN2B is disulfide-linked to the pore-forming alpha subunit. Interacts with SCN1A; regulatory subunit of SCN1A/Nav1.1. Interacts with SCN2A; regulatory subunit of SCN2A/Nav1.2. Interacts with SCN3A; regulatory subunit of SCN3A/Nav1.3. Interacts with SCN5A; regulatory subunit of SCN5A/Nav1.5. Interacts with SCN8A; regulatory subunit of SCN8A/Nav1.6. Interacts with SCN9A; regulatory subunit of SCN9A/Nav1.7 (By similarity). Interacts with SCN10A; regulatory subunit of SCN10A/Nav1.8. Interacts with TNR; may play a crucial role in clustering and regulation of activity of SCN2B-containing Nav channels at nodes of Ranvier (By similarity).</text>
</comment>
<comment type="subcellular location">
    <subcellularLocation>
        <location evidence="1">Cell membrane</location>
        <topology evidence="1">Single-pass type I membrane protein</topology>
    </subcellularLocation>
    <subcellularLocation>
        <location evidence="2">Cell projection</location>
        <location evidence="2">Axon</location>
    </subcellularLocation>
    <text evidence="2">Clusters at the axon initial segment and node of Ranvier, the specialized neuronal subcellular domains involved in action potentials generation and propagation.</text>
</comment>
<comment type="similarity">
    <text evidence="6">Belongs to the sodium channel auxiliary subunit SCN2B (TC 8.A.17) family.</text>
</comment>
<sequence>MHRDAWLPRPAFSLTGLSLFFSLVPPGRSMEVTVPATLNVLNGSDARLPCTFNSCYTVNHKQFSLNWTYQECNNCSEEMFLQFRMKIINLKLERFQDRVEFSGNPSKYDVSVMLRNVQPEDEGIYNCYIMNPPDRHRGHGKIHLQVLXEEPPERDSTVAVIVGASVGGFLAVVILVLMVVKCVRRKKEQKLSTDDLKTEEEGKTDGEGNPDDGAK</sequence>
<organism>
    <name type="scientific">Canis lupus familiaris</name>
    <name type="common">Dog</name>
    <name type="synonym">Canis familiaris</name>
    <dbReference type="NCBI Taxonomy" id="9615"/>
    <lineage>
        <taxon>Eukaryota</taxon>
        <taxon>Metazoa</taxon>
        <taxon>Chordata</taxon>
        <taxon>Craniata</taxon>
        <taxon>Vertebrata</taxon>
        <taxon>Euteleostomi</taxon>
        <taxon>Mammalia</taxon>
        <taxon>Eutheria</taxon>
        <taxon>Laurasiatheria</taxon>
        <taxon>Carnivora</taxon>
        <taxon>Caniformia</taxon>
        <taxon>Canidae</taxon>
        <taxon>Canis</taxon>
    </lineage>
</organism>
<reference key="1">
    <citation type="submission" date="2004-03" db="EMBL/GenBank/DDBJ databases">
        <title>Cloning of dog cardiomyocyte sodium channel beta-2 subunit cDNA.</title>
        <authorList>
            <person name="Mishra S."/>
            <person name="Sabbah H.N."/>
            <person name="Undrovinas A.I."/>
        </authorList>
    </citation>
    <scope>NUCLEOTIDE SEQUENCE [MRNA]</scope>
</reference>
<gene>
    <name evidence="1" type="primary">SCN2B</name>
</gene>
<evidence type="ECO:0000250" key="1">
    <source>
        <dbReference type="UniProtKB" id="O60939"/>
    </source>
</evidence>
<evidence type="ECO:0000250" key="2">
    <source>
        <dbReference type="UniProtKB" id="P54900"/>
    </source>
</evidence>
<evidence type="ECO:0000255" key="3"/>
<evidence type="ECO:0000255" key="4">
    <source>
        <dbReference type="PROSITE-ProRule" id="PRU00114"/>
    </source>
</evidence>
<evidence type="ECO:0000256" key="5">
    <source>
        <dbReference type="SAM" id="MobiDB-lite"/>
    </source>
</evidence>
<evidence type="ECO:0000305" key="6"/>
<feature type="signal peptide" evidence="2">
    <location>
        <begin position="1"/>
        <end position="29"/>
    </location>
</feature>
<feature type="chain" id="PRO_0000014930" description="Sodium channel regulatory subunit beta-2">
    <location>
        <begin position="30"/>
        <end position="215"/>
    </location>
</feature>
<feature type="topological domain" description="Extracellular" evidence="1">
    <location>
        <begin position="30"/>
        <end position="157"/>
    </location>
</feature>
<feature type="transmembrane region" description="Helical" evidence="1">
    <location>
        <begin position="158"/>
        <end position="179"/>
    </location>
</feature>
<feature type="topological domain" description="Cytoplasmic" evidence="1">
    <location>
        <begin position="180"/>
        <end position="215"/>
    </location>
</feature>
<feature type="domain" description="Ig-like C2-type" evidence="3">
    <location>
        <begin position="32"/>
        <end position="154"/>
    </location>
</feature>
<feature type="region of interest" description="Disordered" evidence="5">
    <location>
        <begin position="187"/>
        <end position="215"/>
    </location>
</feature>
<feature type="compositionally biased region" description="Basic and acidic residues" evidence="5">
    <location>
        <begin position="189"/>
        <end position="215"/>
    </location>
</feature>
<feature type="site" description="Binds SCN2A" evidence="1">
    <location>
        <position position="56"/>
    </location>
</feature>
<feature type="site" description="Binds SCN2A" evidence="1">
    <location>
        <position position="135"/>
    </location>
</feature>
<feature type="modified residue" description="Phosphoserine" evidence="2">
    <location>
        <position position="192"/>
    </location>
</feature>
<feature type="modified residue" description="Phosphothreonine" evidence="2">
    <location>
        <position position="204"/>
    </location>
</feature>
<feature type="glycosylation site" description="N-linked (GlcNAc...) asparagine" evidence="3">
    <location>
        <position position="42"/>
    </location>
</feature>
<feature type="glycosylation site" description="N-linked (GlcNAc...) asparagine" evidence="3">
    <location>
        <position position="66"/>
    </location>
</feature>
<feature type="glycosylation site" description="N-linked (GlcNAc...) asparagine" evidence="3">
    <location>
        <position position="74"/>
    </location>
</feature>
<feature type="disulfide bond" evidence="4">
    <location>
        <begin position="50"/>
        <end position="127"/>
    </location>
</feature>
<feature type="disulfide bond" description="Interchain; with alpha subunit" evidence="4">
    <location>
        <position position="55"/>
    </location>
</feature>
<feature type="disulfide bond" evidence="1">
    <location>
        <begin position="72"/>
        <end position="75"/>
    </location>
</feature>
<keyword id="KW-1003">Cell membrane</keyword>
<keyword id="KW-0966">Cell projection</keyword>
<keyword id="KW-1015">Disulfide bond</keyword>
<keyword id="KW-0325">Glycoprotein</keyword>
<keyword id="KW-0393">Immunoglobulin domain</keyword>
<keyword id="KW-0406">Ion transport</keyword>
<keyword id="KW-0472">Membrane</keyword>
<keyword id="KW-0597">Phosphoprotein</keyword>
<keyword id="KW-1185">Reference proteome</keyword>
<keyword id="KW-0732">Signal</keyword>
<keyword id="KW-0915">Sodium</keyword>
<keyword id="KW-0739">Sodium transport</keyword>
<keyword id="KW-0812">Transmembrane</keyword>
<keyword id="KW-1133">Transmembrane helix</keyword>
<keyword id="KW-0813">Transport</keyword>